<sequence length="187" mass="19857">MYTQNTMKKNWYVTVGAAAALAATVGMGTAMAGTLDTTWKEATLPQVKAMLEKDTGKVSGDTVTYSGKTVHVVAAAVLPGFPFPSFEVHDKKNPTLEIPAGATVDVTFINTNKGFGHSFDITKKGPPYAVMPVIDPIVAGTGFSPVPKDGKFGYTDFTWHPTAGTYYYVCQIPGHAATGMFGKIVVK</sequence>
<organism>
    <name type="scientific">Acidithiobacillus ferrooxidans (strain ATCC 23270 / DSM 14882 / CIP 104768 / NCIMB 8455)</name>
    <name type="common">Ferrobacillus ferrooxidans (strain ATCC 23270)</name>
    <dbReference type="NCBI Taxonomy" id="243159"/>
    <lineage>
        <taxon>Bacteria</taxon>
        <taxon>Pseudomonadati</taxon>
        <taxon>Pseudomonadota</taxon>
        <taxon>Acidithiobacillia</taxon>
        <taxon>Acidithiobacillales</taxon>
        <taxon>Acidithiobacillaceae</taxon>
        <taxon>Acidithiobacillus</taxon>
    </lineage>
</organism>
<name>RUS_ACIF2</name>
<accession>B7JAQ0</accession>
<accession>P24930</accession>
<accession>P74919</accession>
<accession>Q56297</accession>
<accession>Q56298</accession>
<gene>
    <name type="primary">rus</name>
    <name type="synonym">rusTA</name>
    <name type="ordered locus">AFE_3146</name>
</gene>
<proteinExistence type="evidence at protein level"/>
<keyword id="KW-0186">Copper</keyword>
<keyword id="KW-0903">Direct protein sequencing</keyword>
<keyword id="KW-0249">Electron transport</keyword>
<keyword id="KW-0479">Metal-binding</keyword>
<keyword id="KW-0574">Periplasm</keyword>
<keyword id="KW-1185">Reference proteome</keyword>
<keyword id="KW-0732">Signal</keyword>
<keyword id="KW-0813">Transport</keyword>
<comment type="function">
    <text>Electron carrier from cytochrome c552 to the A-type oxidase.</text>
</comment>
<comment type="cofactor">
    <cofactor evidence="1">
        <name>Cu cation</name>
        <dbReference type="ChEBI" id="CHEBI:23378"/>
    </cofactor>
    <text evidence="1">Binds 1 copper ion per subunit.</text>
</comment>
<comment type="biophysicochemical properties">
    <redoxPotential>
        <text>E(0) is +680 mV.</text>
    </redoxPotential>
</comment>
<comment type="subunit">
    <text>Monomer.</text>
</comment>
<comment type="subcellular location">
    <subcellularLocation>
        <location>Periplasm</location>
    </subcellularLocation>
</comment>
<feature type="signal peptide" evidence="2">
    <location>
        <begin position="1"/>
        <end position="32"/>
    </location>
</feature>
<feature type="chain" id="PRO_0000369192" description="Rusticyanin">
    <location>
        <begin position="33"/>
        <end position="187"/>
    </location>
</feature>
<feature type="domain" description="Plastocyanin-like">
    <location>
        <begin position="85"/>
        <end position="187"/>
    </location>
</feature>
<feature type="binding site" evidence="1">
    <location>
        <position position="117"/>
    </location>
    <ligand>
        <name>Cu cation</name>
        <dbReference type="ChEBI" id="CHEBI:23378"/>
    </ligand>
</feature>
<feature type="binding site" evidence="1">
    <location>
        <position position="170"/>
    </location>
    <ligand>
        <name>Cu cation</name>
        <dbReference type="ChEBI" id="CHEBI:23378"/>
    </ligand>
</feature>
<feature type="binding site" evidence="1">
    <location>
        <position position="175"/>
    </location>
    <ligand>
        <name>Cu cation</name>
        <dbReference type="ChEBI" id="CHEBI:23378"/>
    </ligand>
</feature>
<feature type="binding site" evidence="1">
    <location>
        <position position="180"/>
    </location>
    <ligand>
        <name>Cu cation</name>
        <dbReference type="ChEBI" id="CHEBI:23378"/>
    </ligand>
</feature>
<protein>
    <recommendedName>
        <fullName>Rusticyanin</fullName>
    </recommendedName>
</protein>
<reference key="1">
    <citation type="journal article" date="2008" name="BMC Genomics">
        <title>Acidithiobacillus ferrooxidans metabolism: from genome sequence to industrial applications.</title>
        <authorList>
            <person name="Valdes J."/>
            <person name="Pedroso I."/>
            <person name="Quatrini R."/>
            <person name="Dodson R.J."/>
            <person name="Tettelin H."/>
            <person name="Blake R. II"/>
            <person name="Eisen J.A."/>
            <person name="Holmes D.S."/>
        </authorList>
    </citation>
    <scope>NUCLEOTIDE SEQUENCE [LARGE SCALE GENOMIC DNA]</scope>
    <source>
        <strain>ATCC 23270 / DSM 14882 / CIP 104768 / NCIMB 8455</strain>
    </source>
</reference>
<reference key="2">
    <citation type="journal article" date="1996" name="FEMS Microbiol. Lett.">
        <title>The structural gene for rusticyanin from Thiobacillus ferrooxidans: cloning and sequencing of the rusticyanin gene.</title>
        <authorList>
            <person name="Hall J.F."/>
            <person name="Hasnain S.S."/>
            <person name="Ingledew W.J."/>
        </authorList>
    </citation>
    <scope>NUCLEOTIDE SEQUENCE [GENOMIC DNA] OF 33-187</scope>
</reference>
<reference key="3">
    <citation type="journal article" date="1991" name="Biochemistry">
        <title>Amino acid sequence of the blue copper protein rusticyanin from Thiobacillus ferrooxidans.</title>
        <authorList>
            <person name="Ronk M."/>
            <person name="Shively J.E."/>
            <person name="Shute E.A."/>
            <person name="Blake R.C. II"/>
        </authorList>
    </citation>
    <scope>PROTEIN SEQUENCE OF 33-187</scope>
</reference>
<evidence type="ECO:0000250" key="1"/>
<evidence type="ECO:0000269" key="2">
    <source>
    </source>
</evidence>
<dbReference type="EMBL" id="CP001219">
    <property type="protein sequence ID" value="ACK80662.1"/>
    <property type="molecule type" value="Genomic_DNA"/>
</dbReference>
<dbReference type="EMBL" id="X95324">
    <property type="protein sequence ID" value="CAA64630.1"/>
    <property type="molecule type" value="Genomic_DNA"/>
</dbReference>
<dbReference type="PIR" id="A40302">
    <property type="entry name" value="CUBCRT"/>
</dbReference>
<dbReference type="RefSeq" id="WP_012537622.1">
    <property type="nucleotide sequence ID" value="NC_011761.1"/>
</dbReference>
<dbReference type="SMR" id="B7JAQ0"/>
<dbReference type="STRING" id="243159.AFE_3146"/>
<dbReference type="PaxDb" id="243159-AFE_3146"/>
<dbReference type="GeneID" id="65282136"/>
<dbReference type="KEGG" id="afr:AFE_3146"/>
<dbReference type="eggNOG" id="COG4454">
    <property type="taxonomic scope" value="Bacteria"/>
</dbReference>
<dbReference type="HOGENOM" id="CLU_1444789_0_0_6"/>
<dbReference type="Proteomes" id="UP000001362">
    <property type="component" value="Chromosome"/>
</dbReference>
<dbReference type="GO" id="GO:0042597">
    <property type="term" value="C:periplasmic space"/>
    <property type="evidence" value="ECO:0007669"/>
    <property type="project" value="UniProtKB-SubCell"/>
</dbReference>
<dbReference type="GO" id="GO:0005507">
    <property type="term" value="F:copper ion binding"/>
    <property type="evidence" value="ECO:0007669"/>
    <property type="project" value="InterPro"/>
</dbReference>
<dbReference type="GO" id="GO:0009055">
    <property type="term" value="F:electron transfer activity"/>
    <property type="evidence" value="ECO:0007669"/>
    <property type="project" value="InterPro"/>
</dbReference>
<dbReference type="CDD" id="cd04231">
    <property type="entry name" value="Rusticyanin"/>
    <property type="match status" value="1"/>
</dbReference>
<dbReference type="Gene3D" id="2.60.40.420">
    <property type="entry name" value="Cupredoxins - blue copper proteins"/>
    <property type="match status" value="1"/>
</dbReference>
<dbReference type="InterPro" id="IPR000923">
    <property type="entry name" value="BlueCu_1"/>
</dbReference>
<dbReference type="InterPro" id="IPR028871">
    <property type="entry name" value="BlueCu_1_BS"/>
</dbReference>
<dbReference type="InterPro" id="IPR033138">
    <property type="entry name" value="Cu_oxidase_CS"/>
</dbReference>
<dbReference type="InterPro" id="IPR008972">
    <property type="entry name" value="Cupredoxin"/>
</dbReference>
<dbReference type="InterPro" id="IPR001243">
    <property type="entry name" value="Rusticyanin"/>
</dbReference>
<dbReference type="NCBIfam" id="TIGR03095">
    <property type="entry name" value="rusti_cyanin"/>
    <property type="match status" value="1"/>
</dbReference>
<dbReference type="Pfam" id="PF00127">
    <property type="entry name" value="Copper-bind"/>
    <property type="match status" value="1"/>
</dbReference>
<dbReference type="PRINTS" id="PR00158">
    <property type="entry name" value="RUSTICYANIN"/>
</dbReference>
<dbReference type="SUPFAM" id="SSF49503">
    <property type="entry name" value="Cupredoxins"/>
    <property type="match status" value="1"/>
</dbReference>
<dbReference type="PROSITE" id="PS00196">
    <property type="entry name" value="COPPER_BLUE"/>
    <property type="match status" value="1"/>
</dbReference>
<dbReference type="PROSITE" id="PS00079">
    <property type="entry name" value="MULTICOPPER_OXIDASE1"/>
    <property type="match status" value="1"/>
</dbReference>